<sequence>MNHLTTLDAGFLKAEDVDRHVSLAIGALAVIEGPAPDQEAFLSSLAQRLRPCTRFGQRLRLRPFDLGAPKWVDDPDFDLGRHVWRIALPRPGNEDQLFELIADLMARRLDRGRPLWEVWVIEGLADSKWAILTKLHHCMADGIAATHLLAGLSDESMSDSFASNIHTTMQSQSASVRRGGFRVNPSEALTASTAVMAGIVRAAKGASEIAAGVLSPAASSLNGPISDLRRYSAAKVPLADVEQVCRKFDVTINDVALAAITESYRNVLIQRGERPRFDSLRTLVPVSTRSNSALSKTDNRVSLMLPNLPVDQENPLQRLRIVHSRLTRAKAGGQRQFGNTLMAIANRLPFPMTAWAVGLLMRLPQRGVVTVATNVPGPRRPLQIMGRRVLDLYPVSPIAMQLRTSVAMLSYADDLYFGILADYDVVADAGQLARGIEDAVARLVAISKRRKVTRRRGALSLVV</sequence>
<evidence type="ECO:0000255" key="1"/>
<evidence type="ECO:0000269" key="2">
    <source>
    </source>
</evidence>
<evidence type="ECO:0000269" key="3">
    <source>
    </source>
</evidence>
<evidence type="ECO:0000269" key="4">
    <source>
    </source>
</evidence>
<evidence type="ECO:0000269" key="5">
    <source>
    </source>
</evidence>
<evidence type="ECO:0000269" key="6">
    <source>
    </source>
</evidence>
<evidence type="ECO:0000269" key="7">
    <source>
    </source>
</evidence>
<evidence type="ECO:0000305" key="8"/>
<evidence type="ECO:0000305" key="9">
    <source>
    </source>
</evidence>
<evidence type="ECO:0007744" key="10">
    <source>
    </source>
</evidence>
<comment type="function">
    <text evidence="9">Catalyzes the terminal and only committed step in triacylglycerol synthesis by using diacylglycerol and fatty acyl CoA as substrates. Required for storage lipid synthesis (Probable).</text>
</comment>
<comment type="function">
    <text evidence="4">Upon expression in E.coli functions as a triacylglycerol synthase, making triacylglycerol (TG) from diolein and long-chain fatty acyl-CoA. Prefers C(26:0)-CoA over C(18:1)-CoA. TG synthesis activity increases in M.tuberculosis upon oxygen depletion and NO treatment, with concomitant accumulation of TG in inclusion bodies. As disruption of the gene encoding this protein obviates TG synthesis this seems to be the major enzyme involved in production of TG. Has no wax synthase activity to produce wax esters.</text>
</comment>
<comment type="catalytic activity">
    <reaction evidence="4">
        <text>an acyl-CoA + a 1,2-diacyl-sn-glycerol = a triacyl-sn-glycerol + CoA</text>
        <dbReference type="Rhea" id="RHEA:10868"/>
        <dbReference type="ChEBI" id="CHEBI:17815"/>
        <dbReference type="ChEBI" id="CHEBI:57287"/>
        <dbReference type="ChEBI" id="CHEBI:58342"/>
        <dbReference type="ChEBI" id="CHEBI:64615"/>
        <dbReference type="EC" id="2.3.1.20"/>
    </reaction>
</comment>
<comment type="catalytic activity">
    <reaction evidence="4">
        <text>di-(9Z)-octadecenoylglycerol + (9Z)-octadecenoyl-CoA = 1,2,3-tri-(9Z-octadecenoyl)-glycerol + CoA</text>
        <dbReference type="Rhea" id="RHEA:45780"/>
        <dbReference type="ChEBI" id="CHEBI:53753"/>
        <dbReference type="ChEBI" id="CHEBI:57287"/>
        <dbReference type="ChEBI" id="CHEBI:57387"/>
        <dbReference type="ChEBI" id="CHEBI:75945"/>
    </reaction>
    <physiologicalReaction direction="left-to-right" evidence="4">
        <dbReference type="Rhea" id="RHEA:45781"/>
    </physiologicalReaction>
</comment>
<comment type="biophysicochemical properties">
    <kinetics>
        <KM evidence="5">306 uM for C(26:0)</KM>
        <KM evidence="5">540 uM for C(18:1)</KM>
        <Vmax evidence="5">2.4 nmol/min/mg enzyme (for C(26:0))</Vmax>
        <Vmax evidence="5">1.1 nmol/min/mg enzyme (for C(18:1))</Vmax>
        <text>Upon expression in E.coli.</text>
    </kinetics>
    <phDependence>
        <text evidence="4 5">Optimum pH is 4.5.</text>
    </phDependence>
</comment>
<comment type="pathway">
    <text>Glycerolipid metabolism; triacylglycerol biosynthesis.</text>
</comment>
<comment type="induction">
    <text evidence="2 3 4 5 6 7">A member of the dormancy regulon. Induced in response to reduced oxygen tension (hypoxia), low levels of nitric oxide (NO) and carbon monoxide (CO). It is hoped that this regulon will give insight into the latent, or dormant phase of infection. Also induced when grown at pH 5.0 for 3 weeks.</text>
</comment>
<comment type="disruption phenotype">
    <text evidence="5">No detectable TG under hypoxic growth conditions, or when grown at pH 5.0. However, about 30% of normal levels of TG accumulated when grown in the presence of NO but there was virtually no C(26:0) TG produced.</text>
</comment>
<comment type="similarity">
    <text evidence="8">Belongs to the long-chain O-acyltransferase family.</text>
</comment>
<dbReference type="EC" id="2.3.1.20" evidence="4"/>
<dbReference type="EMBL" id="HM053705">
    <property type="protein sequence ID" value="ADM62323.1"/>
    <property type="molecule type" value="Genomic_DNA"/>
</dbReference>
<dbReference type="EMBL" id="HM053706">
    <property type="protein sequence ID" value="ADM62327.1"/>
    <property type="molecule type" value="Genomic_DNA"/>
</dbReference>
<dbReference type="EMBL" id="AL123456">
    <property type="protein sequence ID" value="CCP45940.1"/>
    <property type="molecule type" value="Genomic_DNA"/>
</dbReference>
<dbReference type="PIR" id="H70922">
    <property type="entry name" value="H70922"/>
</dbReference>
<dbReference type="RefSeq" id="NP_217646.1">
    <property type="nucleotide sequence ID" value="NC_000962.3"/>
</dbReference>
<dbReference type="RefSeq" id="WP_003899932.1">
    <property type="nucleotide sequence ID" value="NZ_NVQJ01000019.1"/>
</dbReference>
<dbReference type="SMR" id="P9WKC9"/>
<dbReference type="STRING" id="83332.Rv3130c"/>
<dbReference type="SwissLipids" id="SLP:000001146"/>
<dbReference type="iPTMnet" id="P9WKC9"/>
<dbReference type="PaxDb" id="83332-Rv3130c"/>
<dbReference type="DNASU" id="888841"/>
<dbReference type="GeneID" id="888841"/>
<dbReference type="KEGG" id="mtu:Rv3130c"/>
<dbReference type="KEGG" id="mtv:RVBD_3130c"/>
<dbReference type="TubercuList" id="Rv3130c"/>
<dbReference type="eggNOG" id="COG1020">
    <property type="taxonomic scope" value="Bacteria"/>
</dbReference>
<dbReference type="InParanoid" id="P9WKC9"/>
<dbReference type="OrthoDB" id="9810950at2"/>
<dbReference type="PhylomeDB" id="P9WKC9"/>
<dbReference type="BRENDA" id="2.3.1.20">
    <property type="organism ID" value="3445"/>
</dbReference>
<dbReference type="UniPathway" id="UPA00282"/>
<dbReference type="Proteomes" id="UP000001584">
    <property type="component" value="Chromosome"/>
</dbReference>
<dbReference type="GO" id="GO:0009274">
    <property type="term" value="C:peptidoglycan-based cell wall"/>
    <property type="evidence" value="ECO:0007005"/>
    <property type="project" value="MTBBASE"/>
</dbReference>
<dbReference type="GO" id="GO:0005886">
    <property type="term" value="C:plasma membrane"/>
    <property type="evidence" value="ECO:0007005"/>
    <property type="project" value="MTBBASE"/>
</dbReference>
<dbReference type="GO" id="GO:0004144">
    <property type="term" value="F:diacylglycerol O-acyltransferase activity"/>
    <property type="evidence" value="ECO:0000314"/>
    <property type="project" value="MTBBASE"/>
</dbReference>
<dbReference type="GO" id="GO:0047196">
    <property type="term" value="F:long-chain-alcohol O-fatty-acyltransferase activity"/>
    <property type="evidence" value="ECO:0000314"/>
    <property type="project" value="MTBBASE"/>
</dbReference>
<dbReference type="GO" id="GO:0008374">
    <property type="term" value="F:O-acyltransferase activity"/>
    <property type="evidence" value="ECO:0000318"/>
    <property type="project" value="GO_Central"/>
</dbReference>
<dbReference type="GO" id="GO:0051701">
    <property type="term" value="P:biological process involved in interaction with host"/>
    <property type="evidence" value="ECO:0000318"/>
    <property type="project" value="GO_Central"/>
</dbReference>
<dbReference type="GO" id="GO:0006071">
    <property type="term" value="P:glycerol metabolic process"/>
    <property type="evidence" value="ECO:0007669"/>
    <property type="project" value="UniProtKB-KW"/>
</dbReference>
<dbReference type="GO" id="GO:0045017">
    <property type="term" value="P:glycerolipid biosynthetic process"/>
    <property type="evidence" value="ECO:0000314"/>
    <property type="project" value="MTBBASE"/>
</dbReference>
<dbReference type="GO" id="GO:0001666">
    <property type="term" value="P:response to hypoxia"/>
    <property type="evidence" value="ECO:0000270"/>
    <property type="project" value="MTBBASE"/>
</dbReference>
<dbReference type="GO" id="GO:0071731">
    <property type="term" value="P:response to nitric oxide"/>
    <property type="evidence" value="ECO:0000270"/>
    <property type="project" value="MTBBASE"/>
</dbReference>
<dbReference type="GO" id="GO:0019432">
    <property type="term" value="P:triglyceride biosynthetic process"/>
    <property type="evidence" value="ECO:0000314"/>
    <property type="project" value="MTBBASE"/>
</dbReference>
<dbReference type="InterPro" id="IPR014292">
    <property type="entry name" value="Acyl_transf_WS/DGAT"/>
</dbReference>
<dbReference type="InterPro" id="IPR045034">
    <property type="entry name" value="O-acyltransferase_WSD1-like"/>
</dbReference>
<dbReference type="InterPro" id="IPR009721">
    <property type="entry name" value="O-acyltransferase_WSD1_C"/>
</dbReference>
<dbReference type="InterPro" id="IPR004255">
    <property type="entry name" value="O-acyltransferase_WSD1_N"/>
</dbReference>
<dbReference type="NCBIfam" id="TIGR02946">
    <property type="entry name" value="acyl_WS_DGAT"/>
    <property type="match status" value="1"/>
</dbReference>
<dbReference type="PANTHER" id="PTHR31650">
    <property type="entry name" value="O-ACYLTRANSFERASE (WSD1-LIKE) FAMILY PROTEIN"/>
    <property type="match status" value="1"/>
</dbReference>
<dbReference type="PANTHER" id="PTHR31650:SF1">
    <property type="entry name" value="WAX ESTER SYNTHASE_DIACYLGLYCEROL ACYLTRANSFERASE 4-RELATED"/>
    <property type="match status" value="1"/>
</dbReference>
<dbReference type="Pfam" id="PF06974">
    <property type="entry name" value="WS_DGAT_C"/>
    <property type="match status" value="1"/>
</dbReference>
<dbReference type="Pfam" id="PF03007">
    <property type="entry name" value="WS_DGAT_cat"/>
    <property type="match status" value="1"/>
</dbReference>
<dbReference type="SUPFAM" id="SSF52777">
    <property type="entry name" value="CoA-dependent acyltransferases"/>
    <property type="match status" value="1"/>
</dbReference>
<keyword id="KW-0007">Acetylation</keyword>
<keyword id="KW-0012">Acyltransferase</keyword>
<keyword id="KW-0319">Glycerol metabolism</keyword>
<keyword id="KW-0444">Lipid biosynthesis</keyword>
<keyword id="KW-0443">Lipid metabolism</keyword>
<keyword id="KW-1185">Reference proteome</keyword>
<keyword id="KW-0808">Transferase</keyword>
<organism>
    <name type="scientific">Mycobacterium tuberculosis (strain ATCC 25618 / H37Rv)</name>
    <dbReference type="NCBI Taxonomy" id="83332"/>
    <lineage>
        <taxon>Bacteria</taxon>
        <taxon>Bacillati</taxon>
        <taxon>Actinomycetota</taxon>
        <taxon>Actinomycetes</taxon>
        <taxon>Mycobacteriales</taxon>
        <taxon>Mycobacteriaceae</taxon>
        <taxon>Mycobacterium</taxon>
        <taxon>Mycobacterium tuberculosis complex</taxon>
    </lineage>
</organism>
<feature type="chain" id="PRO_0000222916" description="Probable diacyglycerol O-acyltransferase tgs1">
    <location>
        <begin position="1"/>
        <end position="463"/>
    </location>
</feature>
<feature type="active site" description="Proton acceptor" evidence="1">
    <location>
        <position position="137"/>
    </location>
</feature>
<feature type="modified residue" description="N-acetylmethionine" evidence="10">
    <location>
        <position position="1"/>
    </location>
</feature>
<protein>
    <recommendedName>
        <fullName>Probable diacyglycerol O-acyltransferase tgs1</fullName>
        <shortName>TGS1</shortName>
        <ecNumber evidence="4">2.3.1.20</ecNumber>
    </recommendedName>
    <alternativeName>
        <fullName>Probable triacylglycerol synthase tgs1</fullName>
    </alternativeName>
</protein>
<name>TGS1_MYCTU</name>
<accession>P9WKC9</accession>
<accession>E0YJK4</accession>
<accession>F2GJ38</accession>
<accession>O07035</accession>
<accession>P0A650</accession>
<proteinExistence type="evidence at protein level"/>
<gene>
    <name type="primary">tgs1</name>
    <name type="ordered locus">Rv3130c</name>
    <name type="ORF">MTCY03A2.28</name>
    <name type="ORF">MTCY164.41c</name>
</gene>
<reference key="1">
    <citation type="journal article" date="2010" name="J. Bacteriol.">
        <title>Massive gene duplication event among clinical isolates of the Mycobacterium tuberculosis W/Beijing family.</title>
        <authorList>
            <person name="Domenech P."/>
            <person name="Kolly G.S."/>
            <person name="Leon-Solis L."/>
            <person name="Fallow A."/>
            <person name="Reed M.B."/>
        </authorList>
    </citation>
    <scope>NUCLEOTIDE SEQUENCE [GENOMIC DNA]</scope>
    <source>
        <strain>G4B1.2</strain>
    </source>
</reference>
<reference key="2">
    <citation type="journal article" date="1998" name="Nature">
        <title>Deciphering the biology of Mycobacterium tuberculosis from the complete genome sequence.</title>
        <authorList>
            <person name="Cole S.T."/>
            <person name="Brosch R."/>
            <person name="Parkhill J."/>
            <person name="Garnier T."/>
            <person name="Churcher C.M."/>
            <person name="Harris D.E."/>
            <person name="Gordon S.V."/>
            <person name="Eiglmeier K."/>
            <person name="Gas S."/>
            <person name="Barry C.E. III"/>
            <person name="Tekaia F."/>
            <person name="Badcock K."/>
            <person name="Basham D."/>
            <person name="Brown D."/>
            <person name="Chillingworth T."/>
            <person name="Connor R."/>
            <person name="Davies R.M."/>
            <person name="Devlin K."/>
            <person name="Feltwell T."/>
            <person name="Gentles S."/>
            <person name="Hamlin N."/>
            <person name="Holroyd S."/>
            <person name="Hornsby T."/>
            <person name="Jagels K."/>
            <person name="Krogh A."/>
            <person name="McLean J."/>
            <person name="Moule S."/>
            <person name="Murphy L.D."/>
            <person name="Oliver S."/>
            <person name="Osborne J."/>
            <person name="Quail M.A."/>
            <person name="Rajandream M.A."/>
            <person name="Rogers J."/>
            <person name="Rutter S."/>
            <person name="Seeger K."/>
            <person name="Skelton S."/>
            <person name="Squares S."/>
            <person name="Squares R."/>
            <person name="Sulston J.E."/>
            <person name="Taylor K."/>
            <person name="Whitehead S."/>
            <person name="Barrell B.G."/>
        </authorList>
    </citation>
    <scope>NUCLEOTIDE SEQUENCE [LARGE SCALE GENOMIC DNA]</scope>
    <source>
        <strain>ATCC 25618 / H37Rv</strain>
    </source>
</reference>
<reference key="3">
    <citation type="journal article" date="2001" name="Proc. Natl. Acad. Sci. U.S.A.">
        <title>Regulation of the Mycobacterium tuberculosis hypoxic response gene encoding alpha -crystallin.</title>
        <authorList>
            <person name="Sherman D.R."/>
            <person name="Voskuil M."/>
            <person name="Schnappinger D."/>
            <person name="Liao R."/>
            <person name="Harrell M.I."/>
            <person name="Schoolnik G.K."/>
        </authorList>
    </citation>
    <scope>INDUCTION BY HYPOXIA</scope>
    <source>
        <strain>ATCC 25618 / H37Rv</strain>
    </source>
</reference>
<reference key="4">
    <citation type="journal article" date="2003" name="J. Exp. Med.">
        <title>Inhibition of respiration by nitric oxide induces a Mycobacterium tuberculosis dormancy program.</title>
        <authorList>
            <person name="Voskuil M.I."/>
            <person name="Schnappinger D."/>
            <person name="Visconti K.C."/>
            <person name="Harrell M.I."/>
            <person name="Dolganov G.M."/>
            <person name="Sherman D.R."/>
            <person name="Schoolnik G.K."/>
        </authorList>
    </citation>
    <scope>INDUCTION BY NITRIC OXIDE (NO) AND BY HYPOXIA</scope>
    <scope>DORMANCY REGULON</scope>
    <source>
        <strain>ATCC 25618 / H37Rv</strain>
    </source>
</reference>
<reference key="5">
    <citation type="journal article" date="2004" name="J. Bacteriol.">
        <title>Induction of a novel class of diacylglycerol acyltransferases and triacylglycerol accumulation in Mycobacterium tuberculosis as it goes into a dormancy-like state in culture.</title>
        <authorList>
            <person name="Daniel J."/>
            <person name="Deb C."/>
            <person name="Dubey V.S."/>
            <person name="Sirakova T.D."/>
            <person name="Abomoelak B."/>
            <person name="Morbidoni H.R."/>
            <person name="Kolattukudy P.E."/>
        </authorList>
    </citation>
    <scope>FUNCTION IN E.COLI</scope>
    <scope>CATALYTIC ACTIVITY</scope>
    <scope>PH DEPENDENCE</scope>
    <scope>INDUCTION BY HYPOXIA</scope>
    <scope>BY NITRIC OXIDE (NO)</scope>
    <source>
        <strain>ATCC 25618 / H37Rv</strain>
    </source>
</reference>
<reference key="6">
    <citation type="journal article" date="2006" name="Microbiology">
        <title>Identification of a diacylglycerol acyltransferase gene involved in accumulation of triacylglycerol in Mycobacterium tuberculosis under stress.</title>
        <authorList>
            <person name="Sirakova T.D."/>
            <person name="Dubey V.S."/>
            <person name="Deb C."/>
            <person name="Daniel J."/>
            <person name="Korotkova T.A."/>
            <person name="Abomoelak B."/>
            <person name="Kolattukudy P.E."/>
        </authorList>
    </citation>
    <scope>BIOPHYSICOCHEMICAL PROPERTIES IN E.COLI</scope>
    <scope>INDUCTION BY ACID</scope>
    <scope>DISRUPTION PHENOTYPE</scope>
    <source>
        <strain>ATCC 25618 / H37Rv</strain>
    </source>
</reference>
<reference key="7">
    <citation type="journal article" date="2008" name="Cell Host Microbe">
        <title>Mycobacterium tuberculosis senses host-derived carbon monoxide during macrophage infection.</title>
        <authorList>
            <person name="Shiloh M.U."/>
            <person name="Manzanillo P."/>
            <person name="Cox J.S."/>
        </authorList>
    </citation>
    <scope>INDUCTION BY CARBON MONOXIDE (CO)</scope>
    <source>
        <strain>ATCC 35801 / TMC 107 / Erdman</strain>
    </source>
</reference>
<reference key="8">
    <citation type="journal article" date="2008" name="J. Biol. Chem.">
        <title>Heme oxygenase-1-derived carbon monoxide induces the Mycobacterium tuberculosis dormancy regulon.</title>
        <authorList>
            <person name="Kumar A."/>
            <person name="Deshane J.S."/>
            <person name="Crossman D.K."/>
            <person name="Bolisetty S."/>
            <person name="Yan B.S."/>
            <person name="Kramnik I."/>
            <person name="Agarwal A."/>
            <person name="Steyn A.J."/>
        </authorList>
    </citation>
    <scope>INDUCTION BY CARBON MONOXIDE (CO)</scope>
    <scope>DORMANCY REGULON</scope>
    <source>
        <strain>ATCC 25618 / H37Rv</strain>
    </source>
</reference>
<reference key="9">
    <citation type="journal article" date="2011" name="Mol. Cell. Proteomics">
        <title>Proteogenomic analysis of Mycobacterium tuberculosis by high resolution mass spectrometry.</title>
        <authorList>
            <person name="Kelkar D.S."/>
            <person name="Kumar D."/>
            <person name="Kumar P."/>
            <person name="Balakrishnan L."/>
            <person name="Muthusamy B."/>
            <person name="Yadav A.K."/>
            <person name="Shrivastava P."/>
            <person name="Marimuthu A."/>
            <person name="Anand S."/>
            <person name="Sundaram H."/>
            <person name="Kingsbury R."/>
            <person name="Harsha H.C."/>
            <person name="Nair B."/>
            <person name="Prasad T.S."/>
            <person name="Chauhan D.S."/>
            <person name="Katoch K."/>
            <person name="Katoch V.M."/>
            <person name="Kumar P."/>
            <person name="Chaerkady R."/>
            <person name="Ramachandran S."/>
            <person name="Dash D."/>
            <person name="Pandey A."/>
        </authorList>
    </citation>
    <scope>ACETYLATION [LARGE SCALE ANALYSIS] AT MET-1</scope>
    <scope>IDENTIFICATION BY MASS SPECTROMETRY [LARGE SCALE ANALYSIS]</scope>
    <source>
        <strain>ATCC 25618 / H37Rv</strain>
    </source>
</reference>